<accession>Q8FNL8</accession>
<reference key="1">
    <citation type="journal article" date="2003" name="Genome Res.">
        <title>Comparative complete genome sequence analysis of the amino acid replacements responsible for the thermostability of Corynebacterium efficiens.</title>
        <authorList>
            <person name="Nishio Y."/>
            <person name="Nakamura Y."/>
            <person name="Kawarabayasi Y."/>
            <person name="Usuda Y."/>
            <person name="Kimura E."/>
            <person name="Sugimoto S."/>
            <person name="Matsui K."/>
            <person name="Yamagishi A."/>
            <person name="Kikuchi H."/>
            <person name="Ikeo K."/>
            <person name="Gojobori T."/>
        </authorList>
    </citation>
    <scope>NUCLEOTIDE SEQUENCE [LARGE SCALE GENOMIC DNA]</scope>
    <source>
        <strain>DSM 44549 / YS-314 / AJ 12310 / JCM 11189 / NBRC 100395</strain>
    </source>
</reference>
<keyword id="KW-0067">ATP-binding</keyword>
<keyword id="KW-0460">Magnesium</keyword>
<keyword id="KW-0511">Multifunctional enzyme</keyword>
<keyword id="KW-0547">Nucleotide-binding</keyword>
<keyword id="KW-0548">Nucleotidyltransferase</keyword>
<keyword id="KW-1185">Reference proteome</keyword>
<keyword id="KW-0808">Transferase</keyword>
<sequence>MTDPLIHTRKVMGFVRDPLPTTGALSLKSTNARADLEWLGWRNVESIPLMWALSGAGDPDVALNQLVRMYQTLESQSPQAREELDQRIRADEAFRVRLLALLGGSSAMGDHLVANTHLWELLTEEAPTRAEMFTAMLESVGATPAEVVPVDDEGEERQVANTATEDLTTPGTYRATLTGVDAERALRFTYRTLMMRLAALDLAGTYPNDARRRSQPRVEFTTVTRRLSNLADAALTAALAVAVTGVYGQKPVDARLSVMAMGKCGAQELNYISDVDVIFIAEPAHSRSTRLAAEFIRTGCSSFFEVDAALRPEGKSGALVRTLESHIAYYKRWAETWEFQALLKARPMTGDMDLGQAYLDAIGPMVWTASQRDSFVDDIQAMRRRVLENVPEELRDRELKLGRGGLRDVEFAVQLLQMVHGRYDETLRVRSTVEALQVLVDQGYIGREDGHNLIESYEFLRLLEHRLQLERVKRTHTMPKVEDRMNMRWLARASGFTGSGGQSSARAMEHHLRRVRLQIQSLHSQLFYRPLLNSVVNLSVDAMKLSQEAAKLQLGALGYQHPVRAYEHLTALASGTSRKAKIQAMLLPTLMEWLSQTADPDAGLLNYRKLSDAAYDRSWFLRMLRDEGVVGQRLMRILGTSPYTSELIIATPDFVSELGDGTTGPKLLETAPDRVCKALKATVARHDDPDRAIQAARSLRRQELARVASADLLNLLTVQEVCHSLSLVWDAVLDAALEAEIRAATADPAKPDEPLAAISVIGMGRLGGAELGYGSDADVMFVAEPAPGVDENEAIAWAISVCESMRSRLAKPSGDPPLEVDLGLRPEGRSGAVVRTIESYENYYAKWGETWEVQALLRASWVAGDRELGTRFLETIDKFRYPAGGASDAQIREVRRMKARVDNERLPRGADRNTHTKLGRGALADIEWTVQLLTMLHAHEHPELHNTSTLEVLEVVEEKGIINPLQAQTLREAWLTATAARNALVLVKGKRADQLPPPGRHLAQVAGAAGWDPDEYQEYLDHYLKVTRKSRQVVEEVFWGLDSVEARREL</sequence>
<feature type="chain" id="PRO_0000209242" description="Bifunctional glutamine synthetase adenylyltransferase/adenylyl-removing enzyme">
    <location>
        <begin position="1"/>
        <end position="1050"/>
    </location>
</feature>
<feature type="region of interest" description="Adenylyl removase" evidence="1">
    <location>
        <begin position="1"/>
        <end position="531"/>
    </location>
</feature>
<feature type="region of interest" description="Adenylyl transferase" evidence="1">
    <location>
        <begin position="537"/>
        <end position="1050"/>
    </location>
</feature>
<comment type="function">
    <text evidence="1">Involved in the regulation of glutamine synthetase GlnA, a key enzyme in the process to assimilate ammonia. When cellular nitrogen levels are high, the C-terminal adenylyl transferase (AT) inactivates GlnA by covalent transfer of an adenylyl group from ATP to specific tyrosine residue of GlnA, thus reducing its activity. Conversely, when nitrogen levels are low, the N-terminal adenylyl removase (AR) activates GlnA by removing the adenylyl group by phosphorolysis, increasing its activity. The regulatory region of GlnE binds the signal transduction protein PII (GlnB) which indicates the nitrogen status of the cell.</text>
</comment>
<comment type="catalytic activity">
    <reaction evidence="1">
        <text>[glutamine synthetase]-O(4)-(5'-adenylyl)-L-tyrosine + phosphate = [glutamine synthetase]-L-tyrosine + ADP</text>
        <dbReference type="Rhea" id="RHEA:43716"/>
        <dbReference type="Rhea" id="RHEA-COMP:10660"/>
        <dbReference type="Rhea" id="RHEA-COMP:10661"/>
        <dbReference type="ChEBI" id="CHEBI:43474"/>
        <dbReference type="ChEBI" id="CHEBI:46858"/>
        <dbReference type="ChEBI" id="CHEBI:83624"/>
        <dbReference type="ChEBI" id="CHEBI:456216"/>
        <dbReference type="EC" id="2.7.7.89"/>
    </reaction>
</comment>
<comment type="catalytic activity">
    <reaction evidence="1">
        <text>[glutamine synthetase]-L-tyrosine + ATP = [glutamine synthetase]-O(4)-(5'-adenylyl)-L-tyrosine + diphosphate</text>
        <dbReference type="Rhea" id="RHEA:18589"/>
        <dbReference type="Rhea" id="RHEA-COMP:10660"/>
        <dbReference type="Rhea" id="RHEA-COMP:10661"/>
        <dbReference type="ChEBI" id="CHEBI:30616"/>
        <dbReference type="ChEBI" id="CHEBI:33019"/>
        <dbReference type="ChEBI" id="CHEBI:46858"/>
        <dbReference type="ChEBI" id="CHEBI:83624"/>
        <dbReference type="EC" id="2.7.7.42"/>
    </reaction>
</comment>
<comment type="cofactor">
    <cofactor evidence="1">
        <name>Mg(2+)</name>
        <dbReference type="ChEBI" id="CHEBI:18420"/>
    </cofactor>
</comment>
<comment type="similarity">
    <text evidence="1">Belongs to the GlnE family.</text>
</comment>
<protein>
    <recommendedName>
        <fullName evidence="1">Bifunctional glutamine synthetase adenylyltransferase/adenylyl-removing enzyme</fullName>
    </recommendedName>
    <alternativeName>
        <fullName evidence="1">ATP:glutamine synthetase adenylyltransferase</fullName>
    </alternativeName>
    <alternativeName>
        <fullName evidence="1">ATase</fullName>
    </alternativeName>
    <domain>
        <recommendedName>
            <fullName evidence="1">Glutamine synthetase adenylyl-L-tyrosine phosphorylase</fullName>
            <ecNumber evidence="1">2.7.7.89</ecNumber>
        </recommendedName>
        <alternativeName>
            <fullName evidence="1">Adenylyl removase</fullName>
            <shortName evidence="1">AR</shortName>
            <shortName evidence="1">AT-N</shortName>
        </alternativeName>
    </domain>
    <domain>
        <recommendedName>
            <fullName evidence="1">Glutamine synthetase adenylyl transferase</fullName>
            <ecNumber evidence="1">2.7.7.42</ecNumber>
        </recommendedName>
        <alternativeName>
            <fullName evidence="1">Adenylyl transferase</fullName>
            <shortName evidence="1">AT</shortName>
            <shortName evidence="1">AT-C</shortName>
        </alternativeName>
    </domain>
</protein>
<evidence type="ECO:0000255" key="1">
    <source>
        <dbReference type="HAMAP-Rule" id="MF_00802"/>
    </source>
</evidence>
<proteinExistence type="inferred from homology"/>
<gene>
    <name evidence="1" type="primary">glnE</name>
    <name type="ordered locus">CE2126</name>
</gene>
<organism>
    <name type="scientific">Corynebacterium efficiens (strain DSM 44549 / YS-314 / AJ 12310 / JCM 11189 / NBRC 100395)</name>
    <dbReference type="NCBI Taxonomy" id="196164"/>
    <lineage>
        <taxon>Bacteria</taxon>
        <taxon>Bacillati</taxon>
        <taxon>Actinomycetota</taxon>
        <taxon>Actinomycetes</taxon>
        <taxon>Mycobacteriales</taxon>
        <taxon>Corynebacteriaceae</taxon>
        <taxon>Corynebacterium</taxon>
    </lineage>
</organism>
<name>GLNE_COREF</name>
<dbReference type="EC" id="2.7.7.89" evidence="1"/>
<dbReference type="EC" id="2.7.7.42" evidence="1"/>
<dbReference type="EMBL" id="BA000035">
    <property type="protein sequence ID" value="BAC18936.1"/>
    <property type="molecule type" value="Genomic_DNA"/>
</dbReference>
<dbReference type="RefSeq" id="WP_006768129.1">
    <property type="nucleotide sequence ID" value="NC_004369.1"/>
</dbReference>
<dbReference type="SMR" id="Q8FNL8"/>
<dbReference type="STRING" id="196164.gene:10742554"/>
<dbReference type="KEGG" id="cef:CE2126"/>
<dbReference type="eggNOG" id="COG1391">
    <property type="taxonomic scope" value="Bacteria"/>
</dbReference>
<dbReference type="HOGENOM" id="CLU_006233_1_0_11"/>
<dbReference type="OrthoDB" id="9759366at2"/>
<dbReference type="Proteomes" id="UP000001409">
    <property type="component" value="Chromosome"/>
</dbReference>
<dbReference type="GO" id="GO:0005829">
    <property type="term" value="C:cytosol"/>
    <property type="evidence" value="ECO:0007669"/>
    <property type="project" value="TreeGrafter"/>
</dbReference>
<dbReference type="GO" id="GO:0008882">
    <property type="term" value="F:[glutamate-ammonia-ligase] adenylyltransferase activity"/>
    <property type="evidence" value="ECO:0007669"/>
    <property type="project" value="UniProtKB-UniRule"/>
</dbReference>
<dbReference type="GO" id="GO:0047388">
    <property type="term" value="F:[glutamine synthetase]-adenylyl-L-tyrosine phosphorylase activity"/>
    <property type="evidence" value="ECO:0007669"/>
    <property type="project" value="UniProtKB-EC"/>
</dbReference>
<dbReference type="GO" id="GO:0005524">
    <property type="term" value="F:ATP binding"/>
    <property type="evidence" value="ECO:0007669"/>
    <property type="project" value="UniProtKB-UniRule"/>
</dbReference>
<dbReference type="GO" id="GO:0000287">
    <property type="term" value="F:magnesium ion binding"/>
    <property type="evidence" value="ECO:0007669"/>
    <property type="project" value="UniProtKB-UniRule"/>
</dbReference>
<dbReference type="GO" id="GO:0000820">
    <property type="term" value="P:regulation of glutamine family amino acid metabolic process"/>
    <property type="evidence" value="ECO:0007669"/>
    <property type="project" value="UniProtKB-UniRule"/>
</dbReference>
<dbReference type="CDD" id="cd05401">
    <property type="entry name" value="NT_GlnE_GlnD_like"/>
    <property type="match status" value="2"/>
</dbReference>
<dbReference type="Gene3D" id="3.30.460.10">
    <property type="entry name" value="Beta Polymerase, domain 2"/>
    <property type="match status" value="2"/>
</dbReference>
<dbReference type="Gene3D" id="1.20.120.330">
    <property type="entry name" value="Nucleotidyltransferases domain 2"/>
    <property type="match status" value="2"/>
</dbReference>
<dbReference type="HAMAP" id="MF_00802">
    <property type="entry name" value="GlnE"/>
    <property type="match status" value="1"/>
</dbReference>
<dbReference type="InterPro" id="IPR023057">
    <property type="entry name" value="GlnE"/>
</dbReference>
<dbReference type="InterPro" id="IPR005190">
    <property type="entry name" value="GlnE_rpt_dom"/>
</dbReference>
<dbReference type="InterPro" id="IPR043519">
    <property type="entry name" value="NT_sf"/>
</dbReference>
<dbReference type="InterPro" id="IPR013546">
    <property type="entry name" value="PII_UdlTrfase/GS_AdlTrfase"/>
</dbReference>
<dbReference type="NCBIfam" id="NF010707">
    <property type="entry name" value="PRK14109.1"/>
    <property type="match status" value="1"/>
</dbReference>
<dbReference type="PANTHER" id="PTHR30621:SF0">
    <property type="entry name" value="BIFUNCTIONAL GLUTAMINE SYNTHETASE ADENYLYLTRANSFERASE_ADENYLYL-REMOVING ENZYME"/>
    <property type="match status" value="1"/>
</dbReference>
<dbReference type="PANTHER" id="PTHR30621">
    <property type="entry name" value="GLUTAMINE SYNTHETASE ADENYLYLTRANSFERASE"/>
    <property type="match status" value="1"/>
</dbReference>
<dbReference type="Pfam" id="PF08335">
    <property type="entry name" value="GlnD_UR_UTase"/>
    <property type="match status" value="2"/>
</dbReference>
<dbReference type="Pfam" id="PF03710">
    <property type="entry name" value="GlnE"/>
    <property type="match status" value="2"/>
</dbReference>
<dbReference type="SUPFAM" id="SSF81301">
    <property type="entry name" value="Nucleotidyltransferase"/>
    <property type="match status" value="2"/>
</dbReference>
<dbReference type="SUPFAM" id="SSF81593">
    <property type="entry name" value="Nucleotidyltransferase substrate binding subunit/domain"/>
    <property type="match status" value="2"/>
</dbReference>